<keyword id="KW-0030">Aminoacyl-tRNA synthetase</keyword>
<keyword id="KW-0067">ATP-binding</keyword>
<keyword id="KW-0963">Cytoplasm</keyword>
<keyword id="KW-0436">Ligase</keyword>
<keyword id="KW-0547">Nucleotide-binding</keyword>
<keyword id="KW-0648">Protein biosynthesis</keyword>
<name>SYP_SACI2</name>
<reference key="1">
    <citation type="journal article" date="2009" name="Proc. Natl. Acad. Sci. U.S.A.">
        <title>Biogeography of the Sulfolobus islandicus pan-genome.</title>
        <authorList>
            <person name="Reno M.L."/>
            <person name="Held N.L."/>
            <person name="Fields C.J."/>
            <person name="Burke P.V."/>
            <person name="Whitaker R.J."/>
        </authorList>
    </citation>
    <scope>NUCLEOTIDE SEQUENCE [LARGE SCALE GENOMIC DNA]</scope>
    <source>
        <strain>L.S.2.15 / Lassen #1</strain>
    </source>
</reference>
<comment type="function">
    <text evidence="1">Catalyzes the attachment of proline to tRNA(Pro) in a two-step reaction: proline is first activated by ATP to form Pro-AMP and then transferred to the acceptor end of tRNA(Pro).</text>
</comment>
<comment type="catalytic activity">
    <reaction evidence="1">
        <text>tRNA(Pro) + L-proline + ATP = L-prolyl-tRNA(Pro) + AMP + diphosphate</text>
        <dbReference type="Rhea" id="RHEA:14305"/>
        <dbReference type="Rhea" id="RHEA-COMP:9700"/>
        <dbReference type="Rhea" id="RHEA-COMP:9702"/>
        <dbReference type="ChEBI" id="CHEBI:30616"/>
        <dbReference type="ChEBI" id="CHEBI:33019"/>
        <dbReference type="ChEBI" id="CHEBI:60039"/>
        <dbReference type="ChEBI" id="CHEBI:78442"/>
        <dbReference type="ChEBI" id="CHEBI:78532"/>
        <dbReference type="ChEBI" id="CHEBI:456215"/>
        <dbReference type="EC" id="6.1.1.15"/>
    </reaction>
</comment>
<comment type="subunit">
    <text evidence="1">Homodimer.</text>
</comment>
<comment type="subcellular location">
    <subcellularLocation>
        <location evidence="1">Cytoplasm</location>
    </subcellularLocation>
</comment>
<comment type="domain">
    <text evidence="1">Consists of three domains: the N-terminal catalytic domain, the anticodon-binding domain and the C-terminal extension.</text>
</comment>
<comment type="similarity">
    <text evidence="1">Belongs to the class-II aminoacyl-tRNA synthetase family. ProS type 3 subfamily.</text>
</comment>
<proteinExistence type="inferred from homology"/>
<accession>C3MQL0</accession>
<sequence>MQITRDKWSKNFSEWFDWVLREGEFYDYGRYPVKGMGVWMPYGFKLRQNIISIIRNLLDSTGHEEVLFPLLIPEDLLRRESTHIKGFEEEVFWVTKGGSEDLDVKLALRPTSEVAITTMENLWLKSYKQLPKKYYQIVSVFRYETKATRPMIRLREITTFKEAHTVHETYDDAQRQVEEAIEIYKKIFNNLAIPYVLSERPEWDRFAGALHTYAFDTIMPDGKVMQIGTVHHLGQNFSRALDFKIQKKDGSLDYPHQTSYGISDRAIASVIAIHGDDHGPILPPSVAPIKVVVVPIPAKNEEGTQQVMKYSIEICEMLNKNNITCVTDQDTEKTPGEKFYIWEIKGVPIRLEIGPRELASSTVFIKRRDNLKSYTVKKEEVVNKVKEVLNEIQEDLRKRAWESLKSRIEYANDIEKAKNILENNSGIVDVPWCGSKECGLKIEELTNARVLGYPIEDRKVNDKCVICKMNAKTVLRVAKTY</sequence>
<dbReference type="EC" id="6.1.1.15" evidence="1"/>
<dbReference type="EMBL" id="CP001399">
    <property type="protein sequence ID" value="ACP35673.1"/>
    <property type="molecule type" value="Genomic_DNA"/>
</dbReference>
<dbReference type="RefSeq" id="WP_012713818.1">
    <property type="nucleotide sequence ID" value="NC_012589.1"/>
</dbReference>
<dbReference type="SMR" id="C3MQL0"/>
<dbReference type="GeneID" id="7808049"/>
<dbReference type="GeneID" id="7810930"/>
<dbReference type="KEGG" id="sis:LS215_1669"/>
<dbReference type="HOGENOM" id="CLU_001882_4_2_2"/>
<dbReference type="OrthoDB" id="7375at2157"/>
<dbReference type="Proteomes" id="UP000001747">
    <property type="component" value="Chromosome"/>
</dbReference>
<dbReference type="GO" id="GO:0017101">
    <property type="term" value="C:aminoacyl-tRNA synthetase multienzyme complex"/>
    <property type="evidence" value="ECO:0007669"/>
    <property type="project" value="TreeGrafter"/>
</dbReference>
<dbReference type="GO" id="GO:0005737">
    <property type="term" value="C:cytoplasm"/>
    <property type="evidence" value="ECO:0007669"/>
    <property type="project" value="UniProtKB-SubCell"/>
</dbReference>
<dbReference type="GO" id="GO:0005524">
    <property type="term" value="F:ATP binding"/>
    <property type="evidence" value="ECO:0007669"/>
    <property type="project" value="UniProtKB-UniRule"/>
</dbReference>
<dbReference type="GO" id="GO:0004827">
    <property type="term" value="F:proline-tRNA ligase activity"/>
    <property type="evidence" value="ECO:0007669"/>
    <property type="project" value="UniProtKB-UniRule"/>
</dbReference>
<dbReference type="GO" id="GO:0006433">
    <property type="term" value="P:prolyl-tRNA aminoacylation"/>
    <property type="evidence" value="ECO:0007669"/>
    <property type="project" value="UniProtKB-UniRule"/>
</dbReference>
<dbReference type="CDD" id="cd00862">
    <property type="entry name" value="ProRS_anticodon_zinc"/>
    <property type="match status" value="1"/>
</dbReference>
<dbReference type="CDD" id="cd00778">
    <property type="entry name" value="ProRS_core_arch_euk"/>
    <property type="match status" value="1"/>
</dbReference>
<dbReference type="FunFam" id="3.40.50.800:FF:000005">
    <property type="entry name" value="bifunctional glutamate/proline--tRNA ligase"/>
    <property type="match status" value="1"/>
</dbReference>
<dbReference type="FunFam" id="3.30.930.10:FF:000037">
    <property type="entry name" value="Proline--tRNA ligase"/>
    <property type="match status" value="1"/>
</dbReference>
<dbReference type="Gene3D" id="3.40.50.800">
    <property type="entry name" value="Anticodon-binding domain"/>
    <property type="match status" value="1"/>
</dbReference>
<dbReference type="Gene3D" id="3.30.930.10">
    <property type="entry name" value="Bira Bifunctional Protein, Domain 2"/>
    <property type="match status" value="1"/>
</dbReference>
<dbReference type="Gene3D" id="3.30.110.30">
    <property type="entry name" value="C-terminal domain of ProRS"/>
    <property type="match status" value="1"/>
</dbReference>
<dbReference type="HAMAP" id="MF_01571">
    <property type="entry name" value="Pro_tRNA_synth_type3"/>
    <property type="match status" value="1"/>
</dbReference>
<dbReference type="InterPro" id="IPR002314">
    <property type="entry name" value="aa-tRNA-synt_IIb"/>
</dbReference>
<dbReference type="InterPro" id="IPR006195">
    <property type="entry name" value="aa-tRNA-synth_II"/>
</dbReference>
<dbReference type="InterPro" id="IPR045864">
    <property type="entry name" value="aa-tRNA-synth_II/BPL/LPL"/>
</dbReference>
<dbReference type="InterPro" id="IPR004154">
    <property type="entry name" value="Anticodon-bd"/>
</dbReference>
<dbReference type="InterPro" id="IPR036621">
    <property type="entry name" value="Anticodon-bd_dom_sf"/>
</dbReference>
<dbReference type="InterPro" id="IPR002316">
    <property type="entry name" value="Pro-tRNA-ligase_IIa"/>
</dbReference>
<dbReference type="InterPro" id="IPR004499">
    <property type="entry name" value="Pro-tRNA-ligase_IIa_arc-type"/>
</dbReference>
<dbReference type="InterPro" id="IPR016061">
    <property type="entry name" value="Pro-tRNA_ligase_II_C"/>
</dbReference>
<dbReference type="InterPro" id="IPR017449">
    <property type="entry name" value="Pro-tRNA_synth_II"/>
</dbReference>
<dbReference type="InterPro" id="IPR033721">
    <property type="entry name" value="ProRS_core_arch_euk"/>
</dbReference>
<dbReference type="NCBIfam" id="TIGR00408">
    <property type="entry name" value="proS_fam_I"/>
    <property type="match status" value="1"/>
</dbReference>
<dbReference type="PANTHER" id="PTHR43382:SF2">
    <property type="entry name" value="BIFUNCTIONAL GLUTAMATE_PROLINE--TRNA LIGASE"/>
    <property type="match status" value="1"/>
</dbReference>
<dbReference type="PANTHER" id="PTHR43382">
    <property type="entry name" value="PROLYL-TRNA SYNTHETASE"/>
    <property type="match status" value="1"/>
</dbReference>
<dbReference type="Pfam" id="PF03129">
    <property type="entry name" value="HGTP_anticodon"/>
    <property type="match status" value="1"/>
</dbReference>
<dbReference type="Pfam" id="PF09180">
    <property type="entry name" value="ProRS-C_1"/>
    <property type="match status" value="1"/>
</dbReference>
<dbReference type="Pfam" id="PF00587">
    <property type="entry name" value="tRNA-synt_2b"/>
    <property type="match status" value="1"/>
</dbReference>
<dbReference type="PRINTS" id="PR01046">
    <property type="entry name" value="TRNASYNTHPRO"/>
</dbReference>
<dbReference type="SMART" id="SM00946">
    <property type="entry name" value="ProRS-C_1"/>
    <property type="match status" value="1"/>
</dbReference>
<dbReference type="SUPFAM" id="SSF64586">
    <property type="entry name" value="C-terminal domain of ProRS"/>
    <property type="match status" value="1"/>
</dbReference>
<dbReference type="SUPFAM" id="SSF52954">
    <property type="entry name" value="Class II aaRS ABD-related"/>
    <property type="match status" value="1"/>
</dbReference>
<dbReference type="SUPFAM" id="SSF55681">
    <property type="entry name" value="Class II aaRS and biotin synthetases"/>
    <property type="match status" value="1"/>
</dbReference>
<dbReference type="PROSITE" id="PS50862">
    <property type="entry name" value="AA_TRNA_LIGASE_II"/>
    <property type="match status" value="1"/>
</dbReference>
<feature type="chain" id="PRO_1000215577" description="Proline--tRNA ligase">
    <location>
        <begin position="1"/>
        <end position="481"/>
    </location>
</feature>
<gene>
    <name evidence="1" type="primary">proS</name>
    <name type="ordered locus">LS215_1669</name>
</gene>
<organism>
    <name type="scientific">Saccharolobus islandicus (strain L.S.2.15 / Lassen #1)</name>
    <name type="common">Sulfolobus islandicus</name>
    <dbReference type="NCBI Taxonomy" id="429572"/>
    <lineage>
        <taxon>Archaea</taxon>
        <taxon>Thermoproteota</taxon>
        <taxon>Thermoprotei</taxon>
        <taxon>Sulfolobales</taxon>
        <taxon>Sulfolobaceae</taxon>
        <taxon>Saccharolobus</taxon>
    </lineage>
</organism>
<protein>
    <recommendedName>
        <fullName evidence="1">Proline--tRNA ligase</fullName>
        <ecNumber evidence="1">6.1.1.15</ecNumber>
    </recommendedName>
    <alternativeName>
        <fullName evidence="1">Prolyl-tRNA synthetase</fullName>
        <shortName evidence="1">ProRS</shortName>
    </alternativeName>
</protein>
<evidence type="ECO:0000255" key="1">
    <source>
        <dbReference type="HAMAP-Rule" id="MF_01571"/>
    </source>
</evidence>